<name>FBX2_MOUSE</name>
<gene>
    <name type="primary">Fbxo2</name>
    <name type="synonym">Fbs1</name>
    <name type="synonym">Fbx2</name>
</gene>
<proteinExistence type="evidence at protein level"/>
<comment type="function">
    <text evidence="4 5 6 7 9">Substrate recognition component of a SCF (SKP1-CUL1-F-box protein) E3 ubiquitin-protein ligase complex that mediates the ubiquitination and subsequent proteasomal degradation of target proteins. Involved in the endoplasmic reticulum-associated degradation pathway (ERAD) for misfolded lumenal proteins by recognizing and binding sugar chains on unfolded glycoproteins that are retrotranslocated into the cytosol and promoting their ubiquitination and subsequent degradation. Prevents formation of cytosolic aggregates of unfolded glycoproteins that have been retrotranslocated into the cytosol. Able to recognize and bind denatured glycoproteins, preferentially those of the high-mannose type.</text>
</comment>
<comment type="pathway">
    <text>Protein modification; protein ubiquitination.</text>
</comment>
<comment type="subunit">
    <text evidence="4 5 7">Component of the SCF(FBXO2) complex consisting of CUL1, RBX1, SKP1 and FBXO2. Predominantly detected as heterodimer with SKP1; the heterodimer with SKP1 is not part of the SCF(FBXO2) complex.</text>
</comment>
<comment type="interaction">
    <interactant intactId="EBI-2314714">
        <id>Q80UW2</id>
    </interactant>
    <interactant intactId="EBI-908364">
        <id>P61823</id>
        <label>RNASE1</label>
    </interactant>
    <organismsDiffer>true</organismsDiffer>
    <experiments>2</experiments>
</comment>
<comment type="interaction">
    <interactant intactId="EBI-2314714">
        <id>Q80UW2</id>
    </interactant>
    <interactant intactId="EBI-307497">
        <id>P63208-1</id>
        <label>SKP1</label>
    </interactant>
    <organismsDiffer>true</organismsDiffer>
    <experiments>4</experiments>
</comment>
<comment type="subcellular location">
    <subcellularLocation>
        <location>Cytoplasm</location>
    </subcellularLocation>
    <subcellularLocation>
        <location>Microsome membrane</location>
        <topology>Peripheral membrane protein</topology>
        <orientation>Cytoplasmic side</orientation>
    </subcellularLocation>
</comment>
<comment type="tissue specificity">
    <text evidence="7 8">Detected in brain and cochlea, in epithelial support cells and hair cells of the organ of Corti (at protein level).</text>
</comment>
<comment type="disruption phenotype">
    <text evidence="8">No visible phenotype at birth. Mice are viable and fertile, but after two to four months, gradual hearing loss sets in, due to degeneration of epithelial support cells and hair cells of the organ of Corti and spiral ganglion neurodegeneration.</text>
</comment>
<feature type="chain" id="PRO_0000119876" description="F-box only protein 2">
    <location>
        <begin position="1"/>
        <end position="297"/>
    </location>
</feature>
<feature type="domain" description="F-box" evidence="1">
    <location>
        <begin position="48"/>
        <end position="95"/>
    </location>
</feature>
<feature type="domain" description="FBA" evidence="2">
    <location>
        <begin position="117"/>
        <end position="297"/>
    </location>
</feature>
<feature type="region of interest" description="Disordered" evidence="3">
    <location>
        <begin position="1"/>
        <end position="47"/>
    </location>
</feature>
<feature type="compositionally biased region" description="Acidic residues" evidence="3">
    <location>
        <begin position="16"/>
        <end position="47"/>
    </location>
</feature>
<feature type="binding site">
    <location>
        <begin position="214"/>
        <end position="216"/>
    </location>
    <ligand>
        <name>a carbohydrate</name>
        <dbReference type="ChEBI" id="CHEBI:16646"/>
    </ligand>
</feature>
<feature type="binding site">
    <location>
        <begin position="279"/>
        <end position="280"/>
    </location>
    <ligand>
        <name>a carbohydrate</name>
        <dbReference type="ChEBI" id="CHEBI:16646"/>
    </ligand>
</feature>
<feature type="site" description="Important for carbohydrate binding">
    <location>
        <position position="159"/>
    </location>
</feature>
<feature type="site" description="Important for carbohydrate binding">
    <location>
        <position position="177"/>
    </location>
</feature>
<feature type="modified residue" description="Phosphoserine" evidence="10">
    <location>
        <position position="106"/>
    </location>
</feature>
<feature type="mutagenesis site" description="Abolishes binding of glycoprotein targets." evidence="5">
    <original>F</original>
    <variation>A</variation>
    <location>
        <position position="177"/>
    </location>
</feature>
<feature type="mutagenesis site" description="Abolishes binding of glycoprotein targets." evidence="5">
    <original>Y</original>
    <variation>A</variation>
    <location>
        <position position="279"/>
    </location>
</feature>
<feature type="mutagenesis site" description="Abolishes binding of glycoprotein targets. Strongly reduced ubiquitination of glycoprotein targets." evidence="5">
    <original>W</original>
    <variation>A</variation>
    <location>
        <position position="280"/>
    </location>
</feature>
<feature type="mutagenesis site" description="No effect on carbohydrate binding." evidence="5">
    <original>K</original>
    <variation>A</variation>
    <location>
        <position position="281"/>
    </location>
</feature>
<feature type="helix" evidence="12">
    <location>
        <begin position="56"/>
        <end position="64"/>
    </location>
</feature>
<feature type="helix" evidence="12">
    <location>
        <begin position="68"/>
        <end position="73"/>
    </location>
</feature>
<feature type="helix" evidence="12">
    <location>
        <begin position="75"/>
        <end position="77"/>
    </location>
</feature>
<feature type="helix" evidence="12">
    <location>
        <begin position="80"/>
        <end position="86"/>
    </location>
</feature>
<feature type="helix" evidence="12">
    <location>
        <begin position="89"/>
        <end position="98"/>
    </location>
</feature>
<feature type="helix" evidence="13">
    <location>
        <begin position="117"/>
        <end position="123"/>
    </location>
</feature>
<feature type="strand" evidence="14">
    <location>
        <begin position="128"/>
        <end position="130"/>
    </location>
</feature>
<feature type="strand" evidence="13">
    <location>
        <begin position="131"/>
        <end position="133"/>
    </location>
</feature>
<feature type="turn" evidence="13">
    <location>
        <begin position="134"/>
        <end position="139"/>
    </location>
</feature>
<feature type="strand" evidence="13">
    <location>
        <begin position="141"/>
        <end position="145"/>
    </location>
</feature>
<feature type="strand" evidence="13">
    <location>
        <begin position="151"/>
        <end position="154"/>
    </location>
</feature>
<feature type="turn" evidence="11">
    <location>
        <begin position="164"/>
        <end position="166"/>
    </location>
</feature>
<feature type="strand" evidence="13">
    <location>
        <begin position="171"/>
        <end position="174"/>
    </location>
</feature>
<feature type="strand" evidence="13">
    <location>
        <begin position="180"/>
        <end position="187"/>
    </location>
</feature>
<feature type="turn" evidence="13">
    <location>
        <begin position="188"/>
        <end position="192"/>
    </location>
</feature>
<feature type="helix" evidence="13">
    <location>
        <begin position="195"/>
        <end position="200"/>
    </location>
</feature>
<feature type="strand" evidence="13">
    <location>
        <begin position="204"/>
        <end position="212"/>
    </location>
</feature>
<feature type="strand" evidence="13">
    <location>
        <begin position="215"/>
        <end position="217"/>
    </location>
</feature>
<feature type="strand" evidence="13">
    <location>
        <begin position="219"/>
        <end position="229"/>
    </location>
</feature>
<feature type="strand" evidence="13">
    <location>
        <begin position="234"/>
        <end position="239"/>
    </location>
</feature>
<feature type="strand" evidence="13">
    <location>
        <begin position="242"/>
        <end position="244"/>
    </location>
</feature>
<feature type="strand" evidence="13">
    <location>
        <begin position="252"/>
        <end position="258"/>
    </location>
</feature>
<feature type="strand" evidence="13">
    <location>
        <begin position="265"/>
        <end position="278"/>
    </location>
</feature>
<feature type="strand" evidence="13">
    <location>
        <begin position="281"/>
        <end position="283"/>
    </location>
</feature>
<feature type="strand" evidence="13">
    <location>
        <begin position="287"/>
        <end position="296"/>
    </location>
</feature>
<sequence>MDGDGDPESVSHPEEASPEEQPEEAGAEASAEEEQLREAEEEEEAEAVEYLAELPEPLLLRVLAELPATELVQACRLVCLRWKELVDGAPLWLLKCQQEGLVPEGSADEERDHWQQFYFLSKRRRNLLRNPCGEEDLEGWSDVEHGGDGWRVEELPGDNGVEFTQDDSVKKYFASSFEWCRKAQVIDLQAEGYWEELLDTTQPAIVVKDWYSGRTDAGSLYELTVRLLSENEDVLAEFATGQVAVPEDGSWMEISHTFIDYGPGVRFVRFEHGGQDSVYWKGWFGARVTNSSVWVEP</sequence>
<accession>Q80UW2</accession>
<accession>Q8R0D2</accession>
<keyword id="KW-0002">3D-structure</keyword>
<keyword id="KW-0963">Cytoplasm</keyword>
<keyword id="KW-0256">Endoplasmic reticulum</keyword>
<keyword id="KW-0430">Lectin</keyword>
<keyword id="KW-0472">Membrane</keyword>
<keyword id="KW-0492">Microsome</keyword>
<keyword id="KW-0597">Phosphoprotein</keyword>
<keyword id="KW-1185">Reference proteome</keyword>
<keyword id="KW-0833">Ubl conjugation pathway</keyword>
<reference key="1">
    <citation type="journal article" date="2004" name="Genome Res.">
        <title>The status, quality, and expansion of the NIH full-length cDNA project: the Mammalian Gene Collection (MGC).</title>
        <authorList>
            <consortium name="The MGC Project Team"/>
        </authorList>
    </citation>
    <scope>NUCLEOTIDE SEQUENCE [LARGE SCALE MRNA]</scope>
    <source>
        <strain>FVB/N-3</strain>
        <tissue>Eye</tissue>
        <tissue>Mammary tumor</tissue>
    </source>
</reference>
<reference key="2">
    <citation type="journal article" date="2002" name="Nature">
        <title>E3 ubiquitin ligase that recognizes sugar chains.</title>
        <authorList>
            <person name="Yoshida Y."/>
            <person name="Chiba T."/>
            <person name="Tokunaga F."/>
            <person name="Kawasaki H."/>
            <person name="Iwai K."/>
            <person name="Suzuki T."/>
            <person name="Ito Y."/>
            <person name="Matsuoka K."/>
            <person name="Yoshida M."/>
            <person name="Tanaka K."/>
            <person name="Tai T."/>
        </authorList>
    </citation>
    <scope>FUNCTION</scope>
    <scope>SUBUNIT</scope>
    <scope>SUBCELLULAR LOCATION</scope>
    <scope>IDENTIFICATION BY MASS SPECTROMETRY</scope>
</reference>
<reference key="3">
    <citation type="journal article" date="2005" name="EMBO Rep.">
        <title>Glycoprotein-specific ubiquitin ligases recognize N-glycans in unfolded substrates.</title>
        <authorList>
            <person name="Yoshida Y."/>
            <person name="Adachi E."/>
            <person name="Fukiya K."/>
            <person name="Iwai K."/>
            <person name="Tanaka K."/>
        </authorList>
    </citation>
    <scope>FUNCTION</scope>
    <scope>SUBCELLULAR LOCATION</scope>
    <scope>INTERACTION WITH VCP</scope>
</reference>
<reference key="4">
    <citation type="journal article" date="2007" name="Biochem. Biophys. Res. Commun.">
        <title>Fbs1 protects the malfolded glycoproteins from the attack of peptide:N-glycanase.</title>
        <authorList>
            <person name="Yamaguchi Y."/>
            <person name="Hirao T."/>
            <person name="Sakata E."/>
            <person name="Kamiya Y."/>
            <person name="Kurimoto E."/>
            <person name="Yoshida Y."/>
            <person name="Suzuki T."/>
            <person name="Tanaka K."/>
            <person name="Kato K."/>
        </authorList>
    </citation>
    <scope>FUNCTION</scope>
    <scope>NMR SPECTROSCOPY</scope>
</reference>
<reference key="5">
    <citation type="journal article" date="2007" name="J. Biol. Chem.">
        <title>A neural-specific F-box protein Fbs1 functions as a chaperone suppressing glycoprotein aggregation.</title>
        <authorList>
            <person name="Yoshida Y."/>
            <person name="Murakami A."/>
            <person name="Iwai K."/>
            <person name="Tanaka K."/>
        </authorList>
    </citation>
    <scope>FUNCTION</scope>
    <scope>SUBUNIT</scope>
    <scope>SUBCELLULAR LOCATION</scope>
    <scope>TISSUE SPECIFICITY</scope>
</reference>
<reference key="6">
    <citation type="journal article" date="2007" name="J. Neurosci.">
        <title>Selective cochlear degeneration in mice lacking the F-box protein, Fbx2, a glycoprotein-specific ubiquitin ligase subunit.</title>
        <authorList>
            <person name="Nelson R.F."/>
            <person name="Glenn K.A."/>
            <person name="Zhang Y."/>
            <person name="Wen H."/>
            <person name="Knutson T."/>
            <person name="Gouvion C.M."/>
            <person name="Robinson B.K."/>
            <person name="Zhou Z."/>
            <person name="Yang B."/>
            <person name="Smith R.J."/>
            <person name="Paulson H.L."/>
        </authorList>
    </citation>
    <scope>DISRUPTION PHENOTYPE</scope>
    <scope>SUBCELLULAR LOCATION</scope>
    <scope>INTERACTION WITH SKP1</scope>
    <scope>TISSUE SPECIFICITY</scope>
</reference>
<reference key="7">
    <citation type="journal article" date="2010" name="Cell">
        <title>A tissue-specific atlas of mouse protein phosphorylation and expression.</title>
        <authorList>
            <person name="Huttlin E.L."/>
            <person name="Jedrychowski M.P."/>
            <person name="Elias J.E."/>
            <person name="Goswami T."/>
            <person name="Rad R."/>
            <person name="Beausoleil S.A."/>
            <person name="Villen J."/>
            <person name="Haas W."/>
            <person name="Sowa M.E."/>
            <person name="Gygi S.P."/>
        </authorList>
    </citation>
    <scope>PHOSPHORYLATION [LARGE SCALE ANALYSIS] AT SER-106</scope>
    <scope>IDENTIFICATION BY MASS SPECTROMETRY [LARGE SCALE ANALYSIS]</scope>
    <source>
        <tissue>Brain</tissue>
        <tissue>Kidney</tissue>
    </source>
</reference>
<reference key="8">
    <citation type="journal article" date="2004" name="Nat. Struct. Mol. Biol.">
        <title>Structural basis of sugar-recognizing ubiquitin ligase.</title>
        <authorList>
            <person name="Mizushima T."/>
            <person name="Hirao T."/>
            <person name="Yoshida Y."/>
            <person name="Lee S.J."/>
            <person name="Chiba T."/>
            <person name="Iwai K."/>
            <person name="Yamaguchi Y."/>
            <person name="Kato K."/>
            <person name="Tsukihara T."/>
            <person name="Tanaka K."/>
        </authorList>
    </citation>
    <scope>X-RAY CRYSTALLOGRAPHY (1.7 ANGSTROMS) OF 117-297 IN COMPLEX WITH CHITOBIOSE</scope>
    <scope>FUNCTION</scope>
    <scope>MUTAGENESIS OF PHE-177; TYR-279; TRP-280 AND LYS-281</scope>
</reference>
<reference key="9">
    <citation type="journal article" date="2007" name="Proc. Natl. Acad. Sci. U.S.A.">
        <title>Structural basis for the selection of glycosylated substrates by SCF(Fbs1) ubiquitin ligase.</title>
        <authorList>
            <person name="Mizushima T."/>
            <person name="Yoshida Y."/>
            <person name="Kumanomidou T."/>
            <person name="Hasegawa Y."/>
            <person name="Suzuki A."/>
            <person name="Yamane T."/>
            <person name="Tanaka K."/>
        </authorList>
    </citation>
    <scope>X-RAY CRYSTALLOGRAPHY (2.4 ANGSTROMS) IN COMPLEXES WITH SKP1 AND GLYCOPROTEIN SUBSTRATE RNASE1</scope>
</reference>
<protein>
    <recommendedName>
        <fullName>F-box only protein 2</fullName>
    </recommendedName>
</protein>
<evidence type="ECO:0000255" key="1">
    <source>
        <dbReference type="PROSITE-ProRule" id="PRU00080"/>
    </source>
</evidence>
<evidence type="ECO:0000255" key="2">
    <source>
        <dbReference type="PROSITE-ProRule" id="PRU00482"/>
    </source>
</evidence>
<evidence type="ECO:0000256" key="3">
    <source>
        <dbReference type="SAM" id="MobiDB-lite"/>
    </source>
</evidence>
<evidence type="ECO:0000269" key="4">
    <source>
    </source>
</evidence>
<evidence type="ECO:0000269" key="5">
    <source>
    </source>
</evidence>
<evidence type="ECO:0000269" key="6">
    <source>
    </source>
</evidence>
<evidence type="ECO:0000269" key="7">
    <source>
    </source>
</evidence>
<evidence type="ECO:0000269" key="8">
    <source>
    </source>
</evidence>
<evidence type="ECO:0000269" key="9">
    <source>
    </source>
</evidence>
<evidence type="ECO:0007744" key="10">
    <source>
    </source>
</evidence>
<evidence type="ECO:0007829" key="11">
    <source>
        <dbReference type="PDB" id="1UMH"/>
    </source>
</evidence>
<evidence type="ECO:0007829" key="12">
    <source>
        <dbReference type="PDB" id="2E31"/>
    </source>
</evidence>
<evidence type="ECO:0007829" key="13">
    <source>
        <dbReference type="PDB" id="2RJ2"/>
    </source>
</evidence>
<evidence type="ECO:0007829" key="14">
    <source>
        <dbReference type="PDB" id="5B4N"/>
    </source>
</evidence>
<dbReference type="EMBL" id="BC027053">
    <property type="protein sequence ID" value="AAH27053.1"/>
    <property type="molecule type" value="mRNA"/>
</dbReference>
<dbReference type="EMBL" id="BC046586">
    <property type="protein sequence ID" value="AAH46586.1"/>
    <property type="molecule type" value="mRNA"/>
</dbReference>
<dbReference type="CCDS" id="CCDS18935.1"/>
<dbReference type="RefSeq" id="NP_001406365.1">
    <property type="nucleotide sequence ID" value="NM_001419436.1"/>
</dbReference>
<dbReference type="RefSeq" id="NP_001406366.1">
    <property type="nucleotide sequence ID" value="NM_001419437.1"/>
</dbReference>
<dbReference type="RefSeq" id="NP_789818.1">
    <property type="nucleotide sequence ID" value="NM_176848.2"/>
</dbReference>
<dbReference type="RefSeq" id="XP_006538877.1">
    <property type="nucleotide sequence ID" value="XM_006538814.3"/>
</dbReference>
<dbReference type="PDB" id="1UMH">
    <property type="method" value="X-ray"/>
    <property type="resolution" value="2.00 A"/>
    <property type="chains" value="A=117-297"/>
</dbReference>
<dbReference type="PDB" id="1UMI">
    <property type="method" value="X-ray"/>
    <property type="resolution" value="2.40 A"/>
    <property type="chains" value="A=117-297"/>
</dbReference>
<dbReference type="PDB" id="2E31">
    <property type="method" value="X-ray"/>
    <property type="resolution" value="2.40 A"/>
    <property type="chains" value="A=1-297"/>
</dbReference>
<dbReference type="PDB" id="2E32">
    <property type="method" value="X-ray"/>
    <property type="resolution" value="3.52 A"/>
    <property type="chains" value="A/C=1-297"/>
</dbReference>
<dbReference type="PDB" id="2E33">
    <property type="method" value="X-ray"/>
    <property type="resolution" value="2.70 A"/>
    <property type="chains" value="A=105-297"/>
</dbReference>
<dbReference type="PDB" id="2RJ2">
    <property type="method" value="X-ray"/>
    <property type="resolution" value="1.70 A"/>
    <property type="chains" value="A=117-297"/>
</dbReference>
<dbReference type="PDB" id="5B4N">
    <property type="method" value="X-ray"/>
    <property type="resolution" value="2.30 A"/>
    <property type="chains" value="A/B=117-297"/>
</dbReference>
<dbReference type="PDBsum" id="1UMH"/>
<dbReference type="PDBsum" id="1UMI"/>
<dbReference type="PDBsum" id="2E31"/>
<dbReference type="PDBsum" id="2E32"/>
<dbReference type="PDBsum" id="2E33"/>
<dbReference type="PDBsum" id="2RJ2"/>
<dbReference type="PDBsum" id="5B4N"/>
<dbReference type="SMR" id="Q80UW2"/>
<dbReference type="BioGRID" id="231053">
    <property type="interactions" value="14"/>
</dbReference>
<dbReference type="CORUM" id="Q80UW2"/>
<dbReference type="DIP" id="DIP-54758N"/>
<dbReference type="FunCoup" id="Q80UW2">
    <property type="interactions" value="540"/>
</dbReference>
<dbReference type="IntAct" id="Q80UW2">
    <property type="interactions" value="5"/>
</dbReference>
<dbReference type="STRING" id="10090.ENSMUSP00000037377"/>
<dbReference type="UniLectin" id="Q80UW2"/>
<dbReference type="GlyGen" id="Q80UW2">
    <property type="glycosylation" value="2 sites, 1 N-linked glycan (1 site), 1 O-linked glycan (1 site)"/>
</dbReference>
<dbReference type="iPTMnet" id="Q80UW2"/>
<dbReference type="PhosphoSitePlus" id="Q80UW2"/>
<dbReference type="SwissPalm" id="Q80UW2"/>
<dbReference type="PaxDb" id="10090-ENSMUSP00000037377"/>
<dbReference type="ProteomicsDB" id="272964"/>
<dbReference type="Antibodypedia" id="28127">
    <property type="antibodies" value="205 antibodies from 30 providers"/>
</dbReference>
<dbReference type="DNASU" id="230904"/>
<dbReference type="Ensembl" id="ENSMUST00000047951.9">
    <property type="protein sequence ID" value="ENSMUSP00000037377.9"/>
    <property type="gene ID" value="ENSMUSG00000041556.9"/>
</dbReference>
<dbReference type="GeneID" id="230904"/>
<dbReference type="KEGG" id="mmu:230904"/>
<dbReference type="UCSC" id="uc008vuk.1">
    <property type="organism name" value="mouse"/>
</dbReference>
<dbReference type="AGR" id="MGI:2446216"/>
<dbReference type="CTD" id="26232"/>
<dbReference type="MGI" id="MGI:2446216">
    <property type="gene designation" value="Fbxo2"/>
</dbReference>
<dbReference type="VEuPathDB" id="HostDB:ENSMUSG00000041556"/>
<dbReference type="eggNOG" id="ENOG502QS9C">
    <property type="taxonomic scope" value="Eukaryota"/>
</dbReference>
<dbReference type="GeneTree" id="ENSGT00940000160929"/>
<dbReference type="HOGENOM" id="CLU_068548_0_0_1"/>
<dbReference type="InParanoid" id="Q80UW2"/>
<dbReference type="OMA" id="CLYELCV"/>
<dbReference type="OrthoDB" id="1107553at2759"/>
<dbReference type="PhylomeDB" id="Q80UW2"/>
<dbReference type="TreeFam" id="TF320527"/>
<dbReference type="Reactome" id="R-MMU-8951664">
    <property type="pathway name" value="Neddylation"/>
</dbReference>
<dbReference type="Reactome" id="R-MMU-983168">
    <property type="pathway name" value="Antigen processing: Ubiquitination &amp; Proteasome degradation"/>
</dbReference>
<dbReference type="UniPathway" id="UPA00143"/>
<dbReference type="BioGRID-ORCS" id="230904">
    <property type="hits" value="0 hits in 78 CRISPR screens"/>
</dbReference>
<dbReference type="CD-CODE" id="CE726F99">
    <property type="entry name" value="Postsynaptic density"/>
</dbReference>
<dbReference type="ChiTaRS" id="Fbxo2">
    <property type="organism name" value="mouse"/>
</dbReference>
<dbReference type="EvolutionaryTrace" id="Q80UW2"/>
<dbReference type="PRO" id="PR:Q80UW2"/>
<dbReference type="Proteomes" id="UP000000589">
    <property type="component" value="Chromosome 4"/>
</dbReference>
<dbReference type="RNAct" id="Q80UW2">
    <property type="molecule type" value="protein"/>
</dbReference>
<dbReference type="Bgee" id="ENSMUSG00000041556">
    <property type="expression patterns" value="Expressed in vestibular membrane of cochlear duct and 112 other cell types or tissues"/>
</dbReference>
<dbReference type="ExpressionAtlas" id="Q80UW2">
    <property type="expression patterns" value="baseline and differential"/>
</dbReference>
<dbReference type="GO" id="GO:0005829">
    <property type="term" value="C:cytosol"/>
    <property type="evidence" value="ECO:0000314"/>
    <property type="project" value="UniProtKB"/>
</dbReference>
<dbReference type="GO" id="GO:0043197">
    <property type="term" value="C:dendritic spine"/>
    <property type="evidence" value="ECO:0000314"/>
    <property type="project" value="MGI"/>
</dbReference>
<dbReference type="GO" id="GO:0005783">
    <property type="term" value="C:endoplasmic reticulum"/>
    <property type="evidence" value="ECO:0007669"/>
    <property type="project" value="UniProtKB-KW"/>
</dbReference>
<dbReference type="GO" id="GO:0098978">
    <property type="term" value="C:glutamatergic synapse"/>
    <property type="evidence" value="ECO:0000314"/>
    <property type="project" value="SynGO"/>
</dbReference>
<dbReference type="GO" id="GO:0016020">
    <property type="term" value="C:membrane"/>
    <property type="evidence" value="ECO:0007669"/>
    <property type="project" value="UniProtKB-KW"/>
</dbReference>
<dbReference type="GO" id="GO:0019005">
    <property type="term" value="C:SCF ubiquitin ligase complex"/>
    <property type="evidence" value="ECO:0000314"/>
    <property type="project" value="UniProtKB"/>
</dbReference>
<dbReference type="GO" id="GO:0001540">
    <property type="term" value="F:amyloid-beta binding"/>
    <property type="evidence" value="ECO:0000314"/>
    <property type="project" value="MGI"/>
</dbReference>
<dbReference type="GO" id="GO:0030246">
    <property type="term" value="F:carbohydrate binding"/>
    <property type="evidence" value="ECO:0000314"/>
    <property type="project" value="MGI"/>
</dbReference>
<dbReference type="GO" id="GO:0031249">
    <property type="term" value="F:denatured protein binding"/>
    <property type="evidence" value="ECO:0000314"/>
    <property type="project" value="MGI"/>
</dbReference>
<dbReference type="GO" id="GO:0036503">
    <property type="term" value="P:ERAD pathway"/>
    <property type="evidence" value="ECO:0000314"/>
    <property type="project" value="MGI"/>
</dbReference>
<dbReference type="GO" id="GO:0006516">
    <property type="term" value="P:glycoprotein catabolic process"/>
    <property type="evidence" value="ECO:0000314"/>
    <property type="project" value="UniProtKB"/>
</dbReference>
<dbReference type="GO" id="GO:0016567">
    <property type="term" value="P:protein ubiquitination"/>
    <property type="evidence" value="ECO:0000314"/>
    <property type="project" value="UniProtKB"/>
</dbReference>
<dbReference type="GO" id="GO:0099576">
    <property type="term" value="P:regulation of protein catabolic process at postsynapse, modulating synaptic transmission"/>
    <property type="evidence" value="ECO:0000314"/>
    <property type="project" value="SynGO"/>
</dbReference>
<dbReference type="GO" id="GO:0031396">
    <property type="term" value="P:regulation of protein ubiquitination"/>
    <property type="evidence" value="ECO:0000314"/>
    <property type="project" value="MGI"/>
</dbReference>
<dbReference type="GO" id="GO:0031146">
    <property type="term" value="P:SCF-dependent proteasomal ubiquitin-dependent protein catabolic process"/>
    <property type="evidence" value="ECO:0000314"/>
    <property type="project" value="UniProtKB"/>
</dbReference>
<dbReference type="GO" id="GO:0006511">
    <property type="term" value="P:ubiquitin-dependent protein catabolic process"/>
    <property type="evidence" value="ECO:0000314"/>
    <property type="project" value="MGI"/>
</dbReference>
<dbReference type="CDD" id="cd22167">
    <property type="entry name" value="F-box_FBXO2"/>
    <property type="match status" value="1"/>
</dbReference>
<dbReference type="FunFam" id="2.60.120.260:FF:000012">
    <property type="entry name" value="F-box only protein 2"/>
    <property type="match status" value="1"/>
</dbReference>
<dbReference type="FunFam" id="1.20.1280.50:FF:000002">
    <property type="entry name" value="F-box only protein 44"/>
    <property type="match status" value="1"/>
</dbReference>
<dbReference type="Gene3D" id="1.20.1280.50">
    <property type="match status" value="1"/>
</dbReference>
<dbReference type="Gene3D" id="2.60.120.260">
    <property type="entry name" value="Galactose-binding domain-like"/>
    <property type="match status" value="1"/>
</dbReference>
<dbReference type="InterPro" id="IPR007397">
    <property type="entry name" value="F-box-assoc_dom"/>
</dbReference>
<dbReference type="InterPro" id="IPR036047">
    <property type="entry name" value="F-box-like_dom_sf"/>
</dbReference>
<dbReference type="InterPro" id="IPR001810">
    <property type="entry name" value="F-box_dom"/>
</dbReference>
<dbReference type="InterPro" id="IPR039752">
    <property type="entry name" value="F-box_only"/>
</dbReference>
<dbReference type="InterPro" id="IPR008979">
    <property type="entry name" value="Galactose-bd-like_sf"/>
</dbReference>
<dbReference type="PANTHER" id="PTHR12125:SF11">
    <property type="entry name" value="F-BOX ONLY PROTEIN 2"/>
    <property type="match status" value="1"/>
</dbReference>
<dbReference type="PANTHER" id="PTHR12125">
    <property type="entry name" value="F-BOX ONLY PROTEIN 6-LIKE PROTEIN"/>
    <property type="match status" value="1"/>
</dbReference>
<dbReference type="Pfam" id="PF12937">
    <property type="entry name" value="F-box-like"/>
    <property type="match status" value="1"/>
</dbReference>
<dbReference type="Pfam" id="PF04300">
    <property type="entry name" value="FBA"/>
    <property type="match status" value="1"/>
</dbReference>
<dbReference type="SMART" id="SM01198">
    <property type="entry name" value="FBA"/>
    <property type="match status" value="1"/>
</dbReference>
<dbReference type="SUPFAM" id="SSF81383">
    <property type="entry name" value="F-box domain"/>
    <property type="match status" value="1"/>
</dbReference>
<dbReference type="SUPFAM" id="SSF49785">
    <property type="entry name" value="Galactose-binding domain-like"/>
    <property type="match status" value="1"/>
</dbReference>
<dbReference type="PROSITE" id="PS51114">
    <property type="entry name" value="FBA"/>
    <property type="match status" value="1"/>
</dbReference>
<dbReference type="PROSITE" id="PS50181">
    <property type="entry name" value="FBOX"/>
    <property type="match status" value="1"/>
</dbReference>
<organism>
    <name type="scientific">Mus musculus</name>
    <name type="common">Mouse</name>
    <dbReference type="NCBI Taxonomy" id="10090"/>
    <lineage>
        <taxon>Eukaryota</taxon>
        <taxon>Metazoa</taxon>
        <taxon>Chordata</taxon>
        <taxon>Craniata</taxon>
        <taxon>Vertebrata</taxon>
        <taxon>Euteleostomi</taxon>
        <taxon>Mammalia</taxon>
        <taxon>Eutheria</taxon>
        <taxon>Euarchontoglires</taxon>
        <taxon>Glires</taxon>
        <taxon>Rodentia</taxon>
        <taxon>Myomorpha</taxon>
        <taxon>Muroidea</taxon>
        <taxon>Muridae</taxon>
        <taxon>Murinae</taxon>
        <taxon>Mus</taxon>
        <taxon>Mus</taxon>
    </lineage>
</organism>